<comment type="function">
    <text evidence="2">Involved in mRNA degradation. Hydrolyzes single-stranded polyribonucleotides processively in the 3' to 5' direction.</text>
</comment>
<comment type="catalytic activity">
    <reaction evidence="2">
        <text>Exonucleolytic cleavage in the 3'- to 5'-direction to yield nucleoside 5'-phosphates.</text>
        <dbReference type="EC" id="3.1.13.1"/>
    </reaction>
</comment>
<comment type="subcellular location">
    <subcellularLocation>
        <location evidence="2">Cytoplasm</location>
    </subcellularLocation>
</comment>
<comment type="similarity">
    <text evidence="2">Belongs to the RNR ribonuclease family. RNase II subfamily.</text>
</comment>
<protein>
    <recommendedName>
        <fullName evidence="2">Exoribonuclease 2</fullName>
        <ecNumber evidence="2">3.1.13.1</ecNumber>
    </recommendedName>
    <alternativeName>
        <fullName evidence="2">Exoribonuclease II</fullName>
        <shortName evidence="2">RNase II</shortName>
        <shortName evidence="2">Ribonuclease II</shortName>
    </alternativeName>
</protein>
<keyword id="KW-0963">Cytoplasm</keyword>
<keyword id="KW-0269">Exonuclease</keyword>
<keyword id="KW-0378">Hydrolase</keyword>
<keyword id="KW-0540">Nuclease</keyword>
<keyword id="KW-0694">RNA-binding</keyword>
<dbReference type="EC" id="3.1.13.1" evidence="2"/>
<dbReference type="EMBL" id="AE017220">
    <property type="protein sequence ID" value="AAX65602.1"/>
    <property type="molecule type" value="Genomic_DNA"/>
</dbReference>
<dbReference type="RefSeq" id="WP_000485054.1">
    <property type="nucleotide sequence ID" value="NC_006905.1"/>
</dbReference>
<dbReference type="SMR" id="Q57NV9"/>
<dbReference type="KEGG" id="sec:SCH_1696"/>
<dbReference type="HOGENOM" id="CLU_002333_7_3_6"/>
<dbReference type="Proteomes" id="UP000000538">
    <property type="component" value="Chromosome"/>
</dbReference>
<dbReference type="GO" id="GO:0005829">
    <property type="term" value="C:cytosol"/>
    <property type="evidence" value="ECO:0007669"/>
    <property type="project" value="UniProtKB-ARBA"/>
</dbReference>
<dbReference type="GO" id="GO:0008859">
    <property type="term" value="F:exoribonuclease II activity"/>
    <property type="evidence" value="ECO:0007669"/>
    <property type="project" value="UniProtKB-UniRule"/>
</dbReference>
<dbReference type="GO" id="GO:0003723">
    <property type="term" value="F:RNA binding"/>
    <property type="evidence" value="ECO:0007669"/>
    <property type="project" value="UniProtKB-KW"/>
</dbReference>
<dbReference type="GO" id="GO:0006402">
    <property type="term" value="P:mRNA catabolic process"/>
    <property type="evidence" value="ECO:0007669"/>
    <property type="project" value="UniProtKB-UniRule"/>
</dbReference>
<dbReference type="FunFam" id="2.40.50.140:FF:000079">
    <property type="entry name" value="Exoribonuclease 2"/>
    <property type="match status" value="1"/>
</dbReference>
<dbReference type="FunFam" id="2.40.50.140:FF:000081">
    <property type="entry name" value="Exoribonuclease 2"/>
    <property type="match status" value="1"/>
</dbReference>
<dbReference type="FunFam" id="2.40.50.640:FF:000001">
    <property type="entry name" value="Exoribonuclease 2"/>
    <property type="match status" value="1"/>
</dbReference>
<dbReference type="Gene3D" id="2.40.50.640">
    <property type="match status" value="1"/>
</dbReference>
<dbReference type="Gene3D" id="2.40.50.140">
    <property type="entry name" value="Nucleic acid-binding proteins"/>
    <property type="match status" value="2"/>
</dbReference>
<dbReference type="HAMAP" id="MF_01036">
    <property type="entry name" value="RNase_II"/>
    <property type="match status" value="1"/>
</dbReference>
<dbReference type="InterPro" id="IPR011129">
    <property type="entry name" value="CSD"/>
</dbReference>
<dbReference type="InterPro" id="IPR012340">
    <property type="entry name" value="NA-bd_OB-fold"/>
</dbReference>
<dbReference type="InterPro" id="IPR013223">
    <property type="entry name" value="RNase_B_OB_dom"/>
</dbReference>
<dbReference type="InterPro" id="IPR011804">
    <property type="entry name" value="RNase_II"/>
</dbReference>
<dbReference type="InterPro" id="IPR001900">
    <property type="entry name" value="RNase_II/R"/>
</dbReference>
<dbReference type="InterPro" id="IPR022966">
    <property type="entry name" value="RNase_II/R_CS"/>
</dbReference>
<dbReference type="InterPro" id="IPR004476">
    <property type="entry name" value="RNase_II/RNase_R"/>
</dbReference>
<dbReference type="InterPro" id="IPR050180">
    <property type="entry name" value="RNR_Ribonuclease"/>
</dbReference>
<dbReference type="InterPro" id="IPR003029">
    <property type="entry name" value="S1_domain"/>
</dbReference>
<dbReference type="NCBIfam" id="TIGR00358">
    <property type="entry name" value="3_prime_RNase"/>
    <property type="match status" value="1"/>
</dbReference>
<dbReference type="NCBIfam" id="NF003455">
    <property type="entry name" value="PRK05054.1"/>
    <property type="match status" value="1"/>
</dbReference>
<dbReference type="NCBIfam" id="TIGR02062">
    <property type="entry name" value="RNase_B"/>
    <property type="match status" value="1"/>
</dbReference>
<dbReference type="PANTHER" id="PTHR23355:SF37">
    <property type="entry name" value="EXORIBONUCLEASE 2"/>
    <property type="match status" value="1"/>
</dbReference>
<dbReference type="PANTHER" id="PTHR23355">
    <property type="entry name" value="RIBONUCLEASE"/>
    <property type="match status" value="1"/>
</dbReference>
<dbReference type="Pfam" id="PF08206">
    <property type="entry name" value="OB_RNB"/>
    <property type="match status" value="1"/>
</dbReference>
<dbReference type="Pfam" id="PF00773">
    <property type="entry name" value="RNB"/>
    <property type="match status" value="1"/>
</dbReference>
<dbReference type="Pfam" id="PF00575">
    <property type="entry name" value="S1"/>
    <property type="match status" value="1"/>
</dbReference>
<dbReference type="SMART" id="SM00357">
    <property type="entry name" value="CSP"/>
    <property type="match status" value="1"/>
</dbReference>
<dbReference type="SMART" id="SM00955">
    <property type="entry name" value="RNB"/>
    <property type="match status" value="1"/>
</dbReference>
<dbReference type="SUPFAM" id="SSF50249">
    <property type="entry name" value="Nucleic acid-binding proteins"/>
    <property type="match status" value="4"/>
</dbReference>
<dbReference type="PROSITE" id="PS01175">
    <property type="entry name" value="RIBONUCLEASE_II"/>
    <property type="match status" value="1"/>
</dbReference>
<feature type="chain" id="PRO_1000063895" description="Exoribonuclease 2">
    <location>
        <begin position="1"/>
        <end position="644"/>
    </location>
</feature>
<feature type="domain" description="RNB" evidence="1">
    <location>
        <begin position="189"/>
        <end position="516"/>
    </location>
</feature>
<feature type="domain" description="S1 motif" evidence="2">
    <location>
        <begin position="561"/>
        <end position="643"/>
    </location>
</feature>
<name>RNB_SALCH</name>
<accession>Q57NV9</accession>
<evidence type="ECO:0000255" key="1"/>
<evidence type="ECO:0000255" key="2">
    <source>
        <dbReference type="HAMAP-Rule" id="MF_01036"/>
    </source>
</evidence>
<proteinExistence type="inferred from homology"/>
<gene>
    <name evidence="2" type="primary">rnb</name>
    <name type="ordered locus">SCH_1696</name>
</gene>
<organism>
    <name type="scientific">Salmonella choleraesuis (strain SC-B67)</name>
    <dbReference type="NCBI Taxonomy" id="321314"/>
    <lineage>
        <taxon>Bacteria</taxon>
        <taxon>Pseudomonadati</taxon>
        <taxon>Pseudomonadota</taxon>
        <taxon>Gammaproteobacteria</taxon>
        <taxon>Enterobacterales</taxon>
        <taxon>Enterobacteriaceae</taxon>
        <taxon>Salmonella</taxon>
    </lineage>
</organism>
<sequence length="644" mass="72381">MFQDNPLLAQLKQQLHSQTPRAEGVVKATEKGFGFLEVDAQKSYFIPPPQMKKVMHGDRIVAVIHTEKERESAEPEELIEPFLTRFVGKVQGKNDRLSIVPDHPLLKDAIPCRAARGVQHEFKEGDWAVAEMRRHPLKGDRSFYADLTQYITFADDHFVPWWVTLARHNLEKEAPNGVATEMLDEGLERQDLTALNFVTIDSASTEDMDDALYAEELADGRLQLTVAIADPTAWIAEGSKLDNTAKIRAFTNYLPGFNIPMLPRELSDDLCSLRANEVRPALACRMIIAADGTIDDDIAFFAATIESKAKLAYDNVSDWLENNGTWQPDNEGIAQQIRLLHRICLSRSEWRHHHALVFKDRPDYRFVLGEKGEVLDIVAEPRRIANRIVEESMIAANLCAARVLRDKLGFGIYNVHTGFDPANADALAALLKTHGLHVDAEEVLTLEGFCKLRRELDAQPSGFLDSRIRRFQSFAEISTEPGPHFGLGLEAYATWTSPIRKYGDMINHRLLKAVIKGEAIARPQEDITQQMAERRRLNRMAERDVGDWLYARFLNDKAGTNTRFAAEIIDVSRGGMRVRLVDNGAIAFIPAPFLHAVRDALVCSQENGTVQIKGETVYKVTDVIDVTIAEVRMETRSIIARPAA</sequence>
<reference key="1">
    <citation type="journal article" date="2005" name="Nucleic Acids Res.">
        <title>The genome sequence of Salmonella enterica serovar Choleraesuis, a highly invasive and resistant zoonotic pathogen.</title>
        <authorList>
            <person name="Chiu C.-H."/>
            <person name="Tang P."/>
            <person name="Chu C."/>
            <person name="Hu S."/>
            <person name="Bao Q."/>
            <person name="Yu J."/>
            <person name="Chou Y.-Y."/>
            <person name="Wang H.-S."/>
            <person name="Lee Y.-S."/>
        </authorList>
    </citation>
    <scope>NUCLEOTIDE SEQUENCE [LARGE SCALE GENOMIC DNA]</scope>
    <source>
        <strain>SC-B67</strain>
    </source>
</reference>